<geneLocation type="chloroplast"/>
<organism>
    <name type="scientific">Colchicum speciosum</name>
    <name type="common">Giant meadow saffron</name>
    <dbReference type="NCBI Taxonomy" id="13445"/>
    <lineage>
        <taxon>Eukaryota</taxon>
        <taxon>Viridiplantae</taxon>
        <taxon>Streptophyta</taxon>
        <taxon>Embryophyta</taxon>
        <taxon>Tracheophyta</taxon>
        <taxon>Spermatophyta</taxon>
        <taxon>Magnoliopsida</taxon>
        <taxon>Liliopsida</taxon>
        <taxon>Liliales</taxon>
        <taxon>Colchicaceae</taxon>
        <taxon>Colchicum</taxon>
    </lineage>
</organism>
<sequence length="516" mass="61785">MEEFQGYLEKYRSRRQYFLYPLLFQEYIYTIAHGHGLNGSSKIEPVEFFGYDNKSSLVLVKRLITRMYQQNCLVYSINDSNQNRFIGRDLFFYSPLFFQMVSEGFAAIVEIPFSLQLGFSFKEKEIQKYHNLRSIHSIFPFLEDKFSHLNYVSEILIPHPIHTETLVQILQCWVQDVPSLHFLRFFLHKYDNWNSFIIPNKSSYAFSKENKKLFWFFYNSYVFEFEFLVVXLRKQSYYLQSTSFGXFLXRRNFYGKMEHLINVCRNYSQKTLRFFKDPFMHYIRYQGKAILASRDTHILMKKWKCYLVNFWQYYFHFWSYSYRIHINQLKNHSFLLGGYFSSVLINPLAVKNKMLDHSFLIDTVTKKFDTTIPVIPLIGSLSKAKFCTVLGHPNSKTIWADLSDSDIVGRFGRICRNLSHYYSGSSKKQSLYRIKYXXRLSCARTLARKHKRTIRALLQRLGTGFLEEFFTEEEQVLSLIFPKTTIPFPLYGLHRERIWNLDIIRIDDLVNHLDWP</sequence>
<reference key="1">
    <citation type="journal article" date="2000" name="Plant Biol.">
        <title>A phylogenetic analysis of the plastid matK gene with emphasis on Melanthiaceae sensu lato.</title>
        <authorList>
            <person name="Fuse S."/>
            <person name="Tamura M.N."/>
        </authorList>
    </citation>
    <scope>NUCLEOTIDE SEQUENCE [GENOMIC DNA]</scope>
</reference>
<evidence type="ECO:0000255" key="1">
    <source>
        <dbReference type="HAMAP-Rule" id="MF_01390"/>
    </source>
</evidence>
<proteinExistence type="inferred from homology"/>
<gene>
    <name evidence="1" type="primary">matK</name>
</gene>
<protein>
    <recommendedName>
        <fullName evidence="1">Maturase K</fullName>
    </recommendedName>
    <alternativeName>
        <fullName evidence="1">Intron maturase</fullName>
    </alternativeName>
</protein>
<keyword id="KW-0150">Chloroplast</keyword>
<keyword id="KW-0507">mRNA processing</keyword>
<keyword id="KW-0934">Plastid</keyword>
<keyword id="KW-0694">RNA-binding</keyword>
<keyword id="KW-0819">tRNA processing</keyword>
<accession>Q9GHE2</accession>
<dbReference type="EMBL" id="AB040181">
    <property type="protein sequence ID" value="BAB16789.2"/>
    <property type="molecule type" value="Genomic_DNA"/>
</dbReference>
<dbReference type="GO" id="GO:0009507">
    <property type="term" value="C:chloroplast"/>
    <property type="evidence" value="ECO:0007669"/>
    <property type="project" value="UniProtKB-SubCell"/>
</dbReference>
<dbReference type="GO" id="GO:0003723">
    <property type="term" value="F:RNA binding"/>
    <property type="evidence" value="ECO:0007669"/>
    <property type="project" value="UniProtKB-KW"/>
</dbReference>
<dbReference type="GO" id="GO:0006397">
    <property type="term" value="P:mRNA processing"/>
    <property type="evidence" value="ECO:0007669"/>
    <property type="project" value="UniProtKB-KW"/>
</dbReference>
<dbReference type="GO" id="GO:0008380">
    <property type="term" value="P:RNA splicing"/>
    <property type="evidence" value="ECO:0007669"/>
    <property type="project" value="UniProtKB-UniRule"/>
</dbReference>
<dbReference type="GO" id="GO:0008033">
    <property type="term" value="P:tRNA processing"/>
    <property type="evidence" value="ECO:0007669"/>
    <property type="project" value="UniProtKB-KW"/>
</dbReference>
<dbReference type="HAMAP" id="MF_01390">
    <property type="entry name" value="MatK"/>
    <property type="match status" value="1"/>
</dbReference>
<dbReference type="InterPro" id="IPR024937">
    <property type="entry name" value="Domain_X"/>
</dbReference>
<dbReference type="InterPro" id="IPR002866">
    <property type="entry name" value="Maturase_MatK"/>
</dbReference>
<dbReference type="InterPro" id="IPR024942">
    <property type="entry name" value="Maturase_MatK_N"/>
</dbReference>
<dbReference type="PANTHER" id="PTHR34811">
    <property type="entry name" value="MATURASE K"/>
    <property type="match status" value="1"/>
</dbReference>
<dbReference type="PANTHER" id="PTHR34811:SF1">
    <property type="entry name" value="MATURASE K"/>
    <property type="match status" value="1"/>
</dbReference>
<dbReference type="Pfam" id="PF01348">
    <property type="entry name" value="Intron_maturas2"/>
    <property type="match status" value="1"/>
</dbReference>
<dbReference type="Pfam" id="PF01824">
    <property type="entry name" value="MatK_N"/>
    <property type="match status" value="1"/>
</dbReference>
<name>MATK_COLSP</name>
<comment type="function">
    <text evidence="1">Usually encoded in the trnK tRNA gene intron. Probably assists in splicing its own and other chloroplast group II introns.</text>
</comment>
<comment type="subcellular location">
    <subcellularLocation>
        <location>Plastid</location>
        <location>Chloroplast</location>
    </subcellularLocation>
</comment>
<comment type="similarity">
    <text evidence="1">Belongs to the intron maturase 2 family. MatK subfamily.</text>
</comment>
<feature type="chain" id="PRO_0000143339" description="Maturase K">
    <location>
        <begin position="1"/>
        <end position="516"/>
    </location>
</feature>